<protein>
    <recommendedName>
        <fullName evidence="1">Dihydroorotase</fullName>
        <shortName evidence="1">DHOase</shortName>
        <ecNumber evidence="1">3.5.2.3</ecNumber>
    </recommendedName>
</protein>
<accession>Q2SCE3</accession>
<comment type="function">
    <text evidence="1">Catalyzes the reversible cyclization of carbamoyl aspartate to dihydroorotate.</text>
</comment>
<comment type="catalytic activity">
    <reaction evidence="1">
        <text>(S)-dihydroorotate + H2O = N-carbamoyl-L-aspartate + H(+)</text>
        <dbReference type="Rhea" id="RHEA:24296"/>
        <dbReference type="ChEBI" id="CHEBI:15377"/>
        <dbReference type="ChEBI" id="CHEBI:15378"/>
        <dbReference type="ChEBI" id="CHEBI:30864"/>
        <dbReference type="ChEBI" id="CHEBI:32814"/>
        <dbReference type="EC" id="3.5.2.3"/>
    </reaction>
</comment>
<comment type="cofactor">
    <cofactor evidence="1">
        <name>Zn(2+)</name>
        <dbReference type="ChEBI" id="CHEBI:29105"/>
    </cofactor>
    <text evidence="1">Binds 2 Zn(2+) ions per subunit.</text>
</comment>
<comment type="pathway">
    <text evidence="1">Pyrimidine metabolism; UMP biosynthesis via de novo pathway; (S)-dihydroorotate from bicarbonate: step 3/3.</text>
</comment>
<comment type="subunit">
    <text evidence="1">Homodimer.</text>
</comment>
<comment type="similarity">
    <text evidence="1">Belongs to the metallo-dependent hydrolases superfamily. DHOase family. Class II DHOase subfamily.</text>
</comment>
<organism>
    <name type="scientific">Hahella chejuensis (strain KCTC 2396)</name>
    <dbReference type="NCBI Taxonomy" id="349521"/>
    <lineage>
        <taxon>Bacteria</taxon>
        <taxon>Pseudomonadati</taxon>
        <taxon>Pseudomonadota</taxon>
        <taxon>Gammaproteobacteria</taxon>
        <taxon>Oceanospirillales</taxon>
        <taxon>Hahellaceae</taxon>
        <taxon>Hahella</taxon>
    </lineage>
</organism>
<evidence type="ECO:0000255" key="1">
    <source>
        <dbReference type="HAMAP-Rule" id="MF_00219"/>
    </source>
</evidence>
<gene>
    <name evidence="1" type="primary">pyrC</name>
    <name type="ordered locus">HCH_04992</name>
</gene>
<name>PYRC_HAHCH</name>
<dbReference type="EC" id="3.5.2.3" evidence="1"/>
<dbReference type="EMBL" id="CP000155">
    <property type="protein sequence ID" value="ABC31681.1"/>
    <property type="molecule type" value="Genomic_DNA"/>
</dbReference>
<dbReference type="RefSeq" id="WP_011398746.1">
    <property type="nucleotide sequence ID" value="NC_007645.1"/>
</dbReference>
<dbReference type="SMR" id="Q2SCE3"/>
<dbReference type="STRING" id="349521.HCH_04992"/>
<dbReference type="KEGG" id="hch:HCH_04992"/>
<dbReference type="eggNOG" id="COG0418">
    <property type="taxonomic scope" value="Bacteria"/>
</dbReference>
<dbReference type="HOGENOM" id="CLU_041558_1_0_6"/>
<dbReference type="OrthoDB" id="9808095at2"/>
<dbReference type="UniPathway" id="UPA00070">
    <property type="reaction ID" value="UER00117"/>
</dbReference>
<dbReference type="Proteomes" id="UP000000238">
    <property type="component" value="Chromosome"/>
</dbReference>
<dbReference type="GO" id="GO:0005829">
    <property type="term" value="C:cytosol"/>
    <property type="evidence" value="ECO:0007669"/>
    <property type="project" value="TreeGrafter"/>
</dbReference>
<dbReference type="GO" id="GO:0004151">
    <property type="term" value="F:dihydroorotase activity"/>
    <property type="evidence" value="ECO:0007669"/>
    <property type="project" value="UniProtKB-UniRule"/>
</dbReference>
<dbReference type="GO" id="GO:0008270">
    <property type="term" value="F:zinc ion binding"/>
    <property type="evidence" value="ECO:0007669"/>
    <property type="project" value="UniProtKB-UniRule"/>
</dbReference>
<dbReference type="GO" id="GO:0006207">
    <property type="term" value="P:'de novo' pyrimidine nucleobase biosynthetic process"/>
    <property type="evidence" value="ECO:0007669"/>
    <property type="project" value="TreeGrafter"/>
</dbReference>
<dbReference type="GO" id="GO:0044205">
    <property type="term" value="P:'de novo' UMP biosynthetic process"/>
    <property type="evidence" value="ECO:0007669"/>
    <property type="project" value="UniProtKB-UniRule"/>
</dbReference>
<dbReference type="CDD" id="cd01294">
    <property type="entry name" value="DHOase"/>
    <property type="match status" value="1"/>
</dbReference>
<dbReference type="FunFam" id="3.20.20.140:FF:000006">
    <property type="entry name" value="Dihydroorotase"/>
    <property type="match status" value="1"/>
</dbReference>
<dbReference type="Gene3D" id="3.20.20.140">
    <property type="entry name" value="Metal-dependent hydrolases"/>
    <property type="match status" value="1"/>
</dbReference>
<dbReference type="HAMAP" id="MF_00219">
    <property type="entry name" value="PyrC_classII"/>
    <property type="match status" value="1"/>
</dbReference>
<dbReference type="InterPro" id="IPR006680">
    <property type="entry name" value="Amidohydro-rel"/>
</dbReference>
<dbReference type="InterPro" id="IPR004721">
    <property type="entry name" value="DHOdimr"/>
</dbReference>
<dbReference type="InterPro" id="IPR002195">
    <property type="entry name" value="Dihydroorotase_CS"/>
</dbReference>
<dbReference type="InterPro" id="IPR032466">
    <property type="entry name" value="Metal_Hydrolase"/>
</dbReference>
<dbReference type="NCBIfam" id="TIGR00856">
    <property type="entry name" value="pyrC_dimer"/>
    <property type="match status" value="1"/>
</dbReference>
<dbReference type="PANTHER" id="PTHR43137">
    <property type="entry name" value="DIHYDROOROTASE"/>
    <property type="match status" value="1"/>
</dbReference>
<dbReference type="PANTHER" id="PTHR43137:SF1">
    <property type="entry name" value="DIHYDROOROTASE"/>
    <property type="match status" value="1"/>
</dbReference>
<dbReference type="Pfam" id="PF01979">
    <property type="entry name" value="Amidohydro_1"/>
    <property type="match status" value="1"/>
</dbReference>
<dbReference type="PIRSF" id="PIRSF001237">
    <property type="entry name" value="DHOdimr"/>
    <property type="match status" value="1"/>
</dbReference>
<dbReference type="SUPFAM" id="SSF51556">
    <property type="entry name" value="Metallo-dependent hydrolases"/>
    <property type="match status" value="1"/>
</dbReference>
<dbReference type="PROSITE" id="PS00482">
    <property type="entry name" value="DIHYDROOROTASE_1"/>
    <property type="match status" value="1"/>
</dbReference>
<dbReference type="PROSITE" id="PS00483">
    <property type="entry name" value="DIHYDROOROTASE_2"/>
    <property type="match status" value="1"/>
</dbReference>
<sequence>MSDLVITRPDDWHLHLRDGDALATTVPATARLFSRAIVMPNLVPPVTHTAQAEAYRHRILSHVPAGAAFDPLMTLYLTNNTSPEEIVAARQSGIVYGCKLYPAGATTNSDAGVTDVANVFSVLEKMSDMGMPLLIHGEVVQADVDIFDREKRFIDETLTPLTERFPNLKIVLEHITTRDAVEFVNQAGSNVGATITAHHLLYNRNHMLVGGIRPHFYCLPILKRSEHQLALRDAAASGSDRFFLGTDSAPHPKEKKEAACGCAGCFTAPSALELYAEAFDELGALDKLEGFASLHGPTFYGLPINSGKVRLSKQEWTMPASMALGDSSIVPFRAGETIRWKAELL</sequence>
<proteinExistence type="inferred from homology"/>
<reference key="1">
    <citation type="journal article" date="2005" name="Nucleic Acids Res.">
        <title>Genomic blueprint of Hahella chejuensis, a marine microbe producing an algicidal agent.</title>
        <authorList>
            <person name="Jeong H."/>
            <person name="Yim J.H."/>
            <person name="Lee C."/>
            <person name="Choi S.-H."/>
            <person name="Park Y.K."/>
            <person name="Yoon S.H."/>
            <person name="Hur C.-G."/>
            <person name="Kang H.-Y."/>
            <person name="Kim D."/>
            <person name="Lee H.H."/>
            <person name="Park K.H."/>
            <person name="Park S.-H."/>
            <person name="Park H.-S."/>
            <person name="Lee H.K."/>
            <person name="Oh T.K."/>
            <person name="Kim J.F."/>
        </authorList>
    </citation>
    <scope>NUCLEOTIDE SEQUENCE [LARGE SCALE GENOMIC DNA]</scope>
    <source>
        <strain>KCTC 2396</strain>
    </source>
</reference>
<feature type="chain" id="PRO_1000024015" description="Dihydroorotase">
    <location>
        <begin position="1"/>
        <end position="345"/>
    </location>
</feature>
<feature type="active site" evidence="1">
    <location>
        <position position="247"/>
    </location>
</feature>
<feature type="binding site" evidence="1">
    <location>
        <position position="13"/>
    </location>
    <ligand>
        <name>Zn(2+)</name>
        <dbReference type="ChEBI" id="CHEBI:29105"/>
        <label>1</label>
    </ligand>
</feature>
<feature type="binding site" evidence="1">
    <location>
        <begin position="15"/>
        <end position="17"/>
    </location>
    <ligand>
        <name>substrate</name>
    </ligand>
</feature>
<feature type="binding site" evidence="1">
    <location>
        <position position="15"/>
    </location>
    <ligand>
        <name>Zn(2+)</name>
        <dbReference type="ChEBI" id="CHEBI:29105"/>
        <label>1</label>
    </ligand>
</feature>
<feature type="binding site" evidence="1">
    <location>
        <position position="41"/>
    </location>
    <ligand>
        <name>substrate</name>
    </ligand>
</feature>
<feature type="binding site" description="via carbamate group" evidence="1">
    <location>
        <position position="99"/>
    </location>
    <ligand>
        <name>Zn(2+)</name>
        <dbReference type="ChEBI" id="CHEBI:29105"/>
        <label>1</label>
    </ligand>
</feature>
<feature type="binding site" description="via carbamate group" evidence="1">
    <location>
        <position position="99"/>
    </location>
    <ligand>
        <name>Zn(2+)</name>
        <dbReference type="ChEBI" id="CHEBI:29105"/>
        <label>2</label>
    </ligand>
</feature>
<feature type="binding site" evidence="1">
    <location>
        <position position="136"/>
    </location>
    <ligand>
        <name>substrate</name>
    </ligand>
</feature>
<feature type="binding site" evidence="1">
    <location>
        <position position="136"/>
    </location>
    <ligand>
        <name>Zn(2+)</name>
        <dbReference type="ChEBI" id="CHEBI:29105"/>
        <label>2</label>
    </ligand>
</feature>
<feature type="binding site" evidence="1">
    <location>
        <position position="174"/>
    </location>
    <ligand>
        <name>Zn(2+)</name>
        <dbReference type="ChEBI" id="CHEBI:29105"/>
        <label>2</label>
    </ligand>
</feature>
<feature type="binding site" evidence="1">
    <location>
        <position position="219"/>
    </location>
    <ligand>
        <name>substrate</name>
    </ligand>
</feature>
<feature type="binding site" evidence="1">
    <location>
        <position position="247"/>
    </location>
    <ligand>
        <name>Zn(2+)</name>
        <dbReference type="ChEBI" id="CHEBI:29105"/>
        <label>1</label>
    </ligand>
</feature>
<feature type="binding site" evidence="1">
    <location>
        <position position="251"/>
    </location>
    <ligand>
        <name>substrate</name>
    </ligand>
</feature>
<feature type="binding site" evidence="1">
    <location>
        <position position="263"/>
    </location>
    <ligand>
        <name>substrate</name>
    </ligand>
</feature>
<feature type="modified residue" description="N6-carboxylysine" evidence="1">
    <location>
        <position position="99"/>
    </location>
</feature>
<keyword id="KW-0378">Hydrolase</keyword>
<keyword id="KW-0479">Metal-binding</keyword>
<keyword id="KW-0665">Pyrimidine biosynthesis</keyword>
<keyword id="KW-1185">Reference proteome</keyword>
<keyword id="KW-0862">Zinc</keyword>